<evidence type="ECO:0000255" key="1">
    <source>
        <dbReference type="HAMAP-Rule" id="MF_00294"/>
    </source>
</evidence>
<evidence type="ECO:0000305" key="2"/>
<comment type="similarity">
    <text evidence="1">Belongs to the bacterial ribosomal protein bL33 family.</text>
</comment>
<accession>A6VSY5</accession>
<feature type="chain" id="PRO_1000078914" description="Large ribosomal subunit protein bL33">
    <location>
        <begin position="1"/>
        <end position="56"/>
    </location>
</feature>
<sequence>MASKGARDLIRMVSSAGTGHFYTTDKNKRNTPDKLEMKKFDPVVRKHVMYKEAKIK</sequence>
<organism>
    <name type="scientific">Marinomonas sp. (strain MWYL1)</name>
    <dbReference type="NCBI Taxonomy" id="400668"/>
    <lineage>
        <taxon>Bacteria</taxon>
        <taxon>Pseudomonadati</taxon>
        <taxon>Pseudomonadota</taxon>
        <taxon>Gammaproteobacteria</taxon>
        <taxon>Oceanospirillales</taxon>
        <taxon>Oceanospirillaceae</taxon>
        <taxon>Marinomonas</taxon>
    </lineage>
</organism>
<keyword id="KW-0687">Ribonucleoprotein</keyword>
<keyword id="KW-0689">Ribosomal protein</keyword>
<proteinExistence type="inferred from homology"/>
<gene>
    <name evidence="1" type="primary">rpmG</name>
    <name type="ordered locus">Mmwyl1_0630</name>
</gene>
<dbReference type="EMBL" id="CP000749">
    <property type="protein sequence ID" value="ABR69564.1"/>
    <property type="molecule type" value="Genomic_DNA"/>
</dbReference>
<dbReference type="SMR" id="A6VSY5"/>
<dbReference type="STRING" id="400668.Mmwyl1_0630"/>
<dbReference type="KEGG" id="mmw:Mmwyl1_0630"/>
<dbReference type="eggNOG" id="COG0267">
    <property type="taxonomic scope" value="Bacteria"/>
</dbReference>
<dbReference type="HOGENOM" id="CLU_190949_1_1_6"/>
<dbReference type="OrthoDB" id="21586at2"/>
<dbReference type="GO" id="GO:0022625">
    <property type="term" value="C:cytosolic large ribosomal subunit"/>
    <property type="evidence" value="ECO:0007669"/>
    <property type="project" value="TreeGrafter"/>
</dbReference>
<dbReference type="GO" id="GO:0003735">
    <property type="term" value="F:structural constituent of ribosome"/>
    <property type="evidence" value="ECO:0007669"/>
    <property type="project" value="InterPro"/>
</dbReference>
<dbReference type="GO" id="GO:0006412">
    <property type="term" value="P:translation"/>
    <property type="evidence" value="ECO:0007669"/>
    <property type="project" value="UniProtKB-UniRule"/>
</dbReference>
<dbReference type="FunFam" id="2.20.28.120:FF:000001">
    <property type="entry name" value="50S ribosomal protein L33"/>
    <property type="match status" value="1"/>
</dbReference>
<dbReference type="Gene3D" id="2.20.28.120">
    <property type="entry name" value="Ribosomal protein L33"/>
    <property type="match status" value="1"/>
</dbReference>
<dbReference type="HAMAP" id="MF_00294">
    <property type="entry name" value="Ribosomal_bL33"/>
    <property type="match status" value="1"/>
</dbReference>
<dbReference type="InterPro" id="IPR001705">
    <property type="entry name" value="Ribosomal_bL33"/>
</dbReference>
<dbReference type="InterPro" id="IPR018264">
    <property type="entry name" value="Ribosomal_bL33_CS"/>
</dbReference>
<dbReference type="InterPro" id="IPR038584">
    <property type="entry name" value="Ribosomal_bL33_sf"/>
</dbReference>
<dbReference type="InterPro" id="IPR011332">
    <property type="entry name" value="Ribosomal_zn-bd"/>
</dbReference>
<dbReference type="NCBIfam" id="NF001860">
    <property type="entry name" value="PRK00595.1"/>
    <property type="match status" value="1"/>
</dbReference>
<dbReference type="NCBIfam" id="TIGR01023">
    <property type="entry name" value="rpmG_bact"/>
    <property type="match status" value="1"/>
</dbReference>
<dbReference type="PANTHER" id="PTHR15238">
    <property type="entry name" value="54S RIBOSOMAL PROTEIN L39, MITOCHONDRIAL"/>
    <property type="match status" value="1"/>
</dbReference>
<dbReference type="PANTHER" id="PTHR15238:SF1">
    <property type="entry name" value="LARGE RIBOSOMAL SUBUNIT PROTEIN BL33M"/>
    <property type="match status" value="1"/>
</dbReference>
<dbReference type="Pfam" id="PF00471">
    <property type="entry name" value="Ribosomal_L33"/>
    <property type="match status" value="1"/>
</dbReference>
<dbReference type="SUPFAM" id="SSF57829">
    <property type="entry name" value="Zn-binding ribosomal proteins"/>
    <property type="match status" value="1"/>
</dbReference>
<dbReference type="PROSITE" id="PS00582">
    <property type="entry name" value="RIBOSOMAL_L33"/>
    <property type="match status" value="1"/>
</dbReference>
<protein>
    <recommendedName>
        <fullName evidence="1">Large ribosomal subunit protein bL33</fullName>
    </recommendedName>
    <alternativeName>
        <fullName evidence="2">50S ribosomal protein L33</fullName>
    </alternativeName>
</protein>
<reference key="1">
    <citation type="submission" date="2007-06" db="EMBL/GenBank/DDBJ databases">
        <title>Complete sequence of Marinomonas sp. MWYL1.</title>
        <authorList>
            <consortium name="US DOE Joint Genome Institute"/>
            <person name="Copeland A."/>
            <person name="Lucas S."/>
            <person name="Lapidus A."/>
            <person name="Barry K."/>
            <person name="Glavina del Rio T."/>
            <person name="Dalin E."/>
            <person name="Tice H."/>
            <person name="Pitluck S."/>
            <person name="Kiss H."/>
            <person name="Brettin T."/>
            <person name="Bruce D."/>
            <person name="Detter J.C."/>
            <person name="Han C."/>
            <person name="Schmutz J."/>
            <person name="Larimer F."/>
            <person name="Land M."/>
            <person name="Hauser L."/>
            <person name="Kyrpides N."/>
            <person name="Kim E."/>
            <person name="Johnston A.W.B."/>
            <person name="Todd J.D."/>
            <person name="Rogers R."/>
            <person name="Wexler M."/>
            <person name="Bond P.L."/>
            <person name="Li Y."/>
            <person name="Richardson P."/>
        </authorList>
    </citation>
    <scope>NUCLEOTIDE SEQUENCE [LARGE SCALE GENOMIC DNA]</scope>
    <source>
        <strain>MWYL1</strain>
    </source>
</reference>
<name>RL33_MARMS</name>